<keyword id="KW-0687">Ribonucleoprotein</keyword>
<keyword id="KW-0689">Ribosomal protein</keyword>
<keyword id="KW-0694">RNA-binding</keyword>
<keyword id="KW-0699">rRNA-binding</keyword>
<keyword id="KW-0820">tRNA-binding</keyword>
<reference key="1">
    <citation type="journal article" date="2001" name="J. Bacteriol.">
        <title>Degenerative minimalism in the genome of a psyllid endosymbiont.</title>
        <authorList>
            <person name="Clark M.A."/>
            <person name="Baumann L."/>
            <person name="Thao M.L."/>
            <person name="Moran N.A."/>
            <person name="Baumann P."/>
        </authorList>
    </citation>
    <scope>NUCLEOTIDE SEQUENCE [GENOMIC DNA]</scope>
</reference>
<sequence length="156" mass="18437">MSRKKRYFKTVILNDPKFGSYIIAKFISYIMNNGKKNLAQKIFYYSISIISIRLNKNPFILIKKILYNVQPDFEIKKKKIGGSVYKIPIKINLKRSLMFSMKWIVKNSKLRNENGYKNKLVGELIDSYYNNSLSTKQKDELNKIIDQNKAYSNFKI</sequence>
<gene>
    <name evidence="1" type="primary">rpsG</name>
    <name evidence="1" type="synonym">rps7</name>
</gene>
<evidence type="ECO:0000255" key="1">
    <source>
        <dbReference type="HAMAP-Rule" id="MF_00480"/>
    </source>
</evidence>
<evidence type="ECO:0000305" key="2"/>
<protein>
    <recommendedName>
        <fullName evidence="1">Small ribosomal subunit protein uS7</fullName>
    </recommendedName>
    <alternativeName>
        <fullName evidence="2">30S ribosomal protein S7</fullName>
    </alternativeName>
</protein>
<name>RS7_CARRU</name>
<feature type="chain" id="PRO_0000124241" description="Small ribosomal subunit protein uS7">
    <location>
        <begin position="1"/>
        <end position="156"/>
    </location>
</feature>
<organism>
    <name type="scientific">Carsonella ruddii</name>
    <dbReference type="NCBI Taxonomy" id="114186"/>
    <lineage>
        <taxon>Bacteria</taxon>
        <taxon>Pseudomonadati</taxon>
        <taxon>Pseudomonadota</taxon>
        <taxon>Gammaproteobacteria</taxon>
        <taxon>Oceanospirillales</taxon>
        <taxon>Halomonadaceae</taxon>
        <taxon>Zymobacter group</taxon>
        <taxon>Candidatus Carsonella</taxon>
    </lineage>
</organism>
<comment type="function">
    <text evidence="1">One of the primary rRNA binding proteins, it binds directly to 16S rRNA where it nucleates assembly of the head domain of the 30S subunit. Is located at the subunit interface close to the decoding center, probably blocks exit of the E-site tRNA.</text>
</comment>
<comment type="subunit">
    <text evidence="1">Part of the 30S ribosomal subunit. Contacts proteins S9 and S11.</text>
</comment>
<comment type="similarity">
    <text evidence="1">Belongs to the universal ribosomal protein uS7 family.</text>
</comment>
<dbReference type="EMBL" id="AF274444">
    <property type="protein sequence ID" value="AAK17078.1"/>
    <property type="molecule type" value="Genomic_DNA"/>
</dbReference>
<dbReference type="SMR" id="Q9AIG8"/>
<dbReference type="GO" id="GO:0015935">
    <property type="term" value="C:small ribosomal subunit"/>
    <property type="evidence" value="ECO:0007669"/>
    <property type="project" value="InterPro"/>
</dbReference>
<dbReference type="GO" id="GO:0019843">
    <property type="term" value="F:rRNA binding"/>
    <property type="evidence" value="ECO:0007669"/>
    <property type="project" value="UniProtKB-UniRule"/>
</dbReference>
<dbReference type="GO" id="GO:0003735">
    <property type="term" value="F:structural constituent of ribosome"/>
    <property type="evidence" value="ECO:0007669"/>
    <property type="project" value="InterPro"/>
</dbReference>
<dbReference type="GO" id="GO:0000049">
    <property type="term" value="F:tRNA binding"/>
    <property type="evidence" value="ECO:0007669"/>
    <property type="project" value="UniProtKB-UniRule"/>
</dbReference>
<dbReference type="GO" id="GO:0006412">
    <property type="term" value="P:translation"/>
    <property type="evidence" value="ECO:0007669"/>
    <property type="project" value="UniProtKB-UniRule"/>
</dbReference>
<dbReference type="Gene3D" id="1.10.455.10">
    <property type="entry name" value="Ribosomal protein S7 domain"/>
    <property type="match status" value="1"/>
</dbReference>
<dbReference type="HAMAP" id="MF_00480_B">
    <property type="entry name" value="Ribosomal_uS7_B"/>
    <property type="match status" value="1"/>
</dbReference>
<dbReference type="InterPro" id="IPR000235">
    <property type="entry name" value="Ribosomal_uS7"/>
</dbReference>
<dbReference type="InterPro" id="IPR005717">
    <property type="entry name" value="Ribosomal_uS7_bac/org-type"/>
</dbReference>
<dbReference type="InterPro" id="IPR020606">
    <property type="entry name" value="Ribosomal_uS7_CS"/>
</dbReference>
<dbReference type="InterPro" id="IPR023798">
    <property type="entry name" value="Ribosomal_uS7_dom"/>
</dbReference>
<dbReference type="InterPro" id="IPR036823">
    <property type="entry name" value="Ribosomal_uS7_dom_sf"/>
</dbReference>
<dbReference type="PANTHER" id="PTHR11205">
    <property type="entry name" value="RIBOSOMAL PROTEIN S7"/>
    <property type="match status" value="1"/>
</dbReference>
<dbReference type="Pfam" id="PF00177">
    <property type="entry name" value="Ribosomal_S7"/>
    <property type="match status" value="1"/>
</dbReference>
<dbReference type="PIRSF" id="PIRSF002122">
    <property type="entry name" value="RPS7p_RPS7a_RPS5e_RPS7o"/>
    <property type="match status" value="1"/>
</dbReference>
<dbReference type="SUPFAM" id="SSF47973">
    <property type="entry name" value="Ribosomal protein S7"/>
    <property type="match status" value="1"/>
</dbReference>
<dbReference type="PROSITE" id="PS00052">
    <property type="entry name" value="RIBOSOMAL_S7"/>
    <property type="match status" value="1"/>
</dbReference>
<proteinExistence type="inferred from homology"/>
<accession>Q9AIG8</accession>